<evidence type="ECO:0000305" key="1"/>
<name>YCF89_TRICV</name>
<dbReference type="EMBL" id="Z67753">
    <property type="protein sequence ID" value="CAA91611.1"/>
    <property type="molecule type" value="Genomic_DNA"/>
</dbReference>
<dbReference type="EMBL" id="Z67753">
    <property type="protein sequence ID" value="CAA91667.1"/>
    <property type="molecule type" value="Genomic_DNA"/>
</dbReference>
<dbReference type="PIR" id="S78238">
    <property type="entry name" value="S78238"/>
</dbReference>
<dbReference type="GO" id="GO:0009507">
    <property type="term" value="C:chloroplast"/>
    <property type="evidence" value="ECO:0007669"/>
    <property type="project" value="UniProtKB-SubCell"/>
</dbReference>
<sequence>MGMSLQLLGINLRIKVILATSWLFENIAKVCGYPTKTLGMPIRTDVIPGYGLPIHQTRVPPFANPTTFLEAVFGNIPQPSTIEKFYYESPQDGYYNFYIPHYRNVVFLPDWLSKWIQLHFDLGIDTVGLETIRNTLFSMLVYFYFFAELRIMLSYFISINPYTRPWVYLISLTDWIYDILFHLGISKRVVLLGFPLLPILIHAALGNLIDSLNHLVFTMPFLPSEGEPGEFLIDGTARKVLLFRYLPALWTSEPIPDRLREFWYTERPEIYQFMKKNYGHLDIDFLPDEILKQIYQFKHDQIDPNSLTKNVEQFKVLGAQLISDSTIDFYQFSNCFVHKQEILFTFFSDYMDRLI</sequence>
<accession>P49827</accession>
<protein>
    <recommendedName>
        <fullName>Uncharacterized protein ycf89</fullName>
    </recommendedName>
    <alternativeName>
        <fullName>ORF355</fullName>
    </alternativeName>
</protein>
<proteinExistence type="inferred from homology"/>
<feature type="chain" id="PRO_0000217453" description="Uncharacterized protein ycf89">
    <location>
        <begin position="1"/>
        <end position="355"/>
    </location>
</feature>
<geneLocation type="chloroplast"/>
<keyword id="KW-0150">Chloroplast</keyword>
<keyword id="KW-0934">Plastid</keyword>
<reference key="1">
    <citation type="journal article" date="1995" name="Plant Mol. Biol. Rep.">
        <title>The chloroplast genome of a chlorophyll a+c-containing alga, Odontella sinensis.</title>
        <authorList>
            <person name="Kowallik K.V."/>
            <person name="Stoebe B."/>
            <person name="Schaffran I."/>
            <person name="Kroth-Pancic P."/>
            <person name="Freier U."/>
        </authorList>
    </citation>
    <scope>NUCLEOTIDE SEQUENCE [LARGE SCALE GENOMIC DNA]</scope>
</reference>
<comment type="subcellular location">
    <subcellularLocation>
        <location>Plastid</location>
        <location>Chloroplast</location>
    </subcellularLocation>
</comment>
<comment type="similarity">
    <text evidence="1">Belongs to the ycf89 family.</text>
</comment>
<organism>
    <name type="scientific">Trieres chinensis</name>
    <name type="common">Marine centric diatom</name>
    <name type="synonym">Odontella sinensis</name>
    <dbReference type="NCBI Taxonomy" id="1514140"/>
    <lineage>
        <taxon>Eukaryota</taxon>
        <taxon>Sar</taxon>
        <taxon>Stramenopiles</taxon>
        <taxon>Ochrophyta</taxon>
        <taxon>Bacillariophyta</taxon>
        <taxon>Mediophyceae</taxon>
        <taxon>Biddulphiophycidae</taxon>
        <taxon>Eupodiscales</taxon>
        <taxon>Parodontellaceae</taxon>
        <taxon>Trieres</taxon>
    </lineage>
</organism>
<gene>
    <name type="primary">ycf89-A</name>
</gene>
<gene>
    <name type="primary">ycf89-B</name>
</gene>